<comment type="catalytic activity">
    <reaction>
        <text>a 2-oxocarboxylate + H(+) = an aldehyde + CO2</text>
        <dbReference type="Rhea" id="RHEA:11628"/>
        <dbReference type="ChEBI" id="CHEBI:15378"/>
        <dbReference type="ChEBI" id="CHEBI:16526"/>
        <dbReference type="ChEBI" id="CHEBI:17478"/>
        <dbReference type="ChEBI" id="CHEBI:35179"/>
        <dbReference type="EC" id="4.1.1.1"/>
    </reaction>
</comment>
<comment type="cofactor">
    <cofactor>
        <name>a metal cation</name>
        <dbReference type="ChEBI" id="CHEBI:25213"/>
    </cofactor>
    <text>Binds 1 metal ion per subunit.</text>
</comment>
<comment type="cofactor">
    <cofactor>
        <name>thiamine diphosphate</name>
        <dbReference type="ChEBI" id="CHEBI:58937"/>
    </cofactor>
    <text>Binds 1 thiamine pyrophosphate per subunit.</text>
</comment>
<comment type="subunit">
    <text evidence="2">Homotetramer.</text>
</comment>
<comment type="tissue specificity">
    <text>Pollen.</text>
</comment>
<comment type="similarity">
    <text evidence="2">Belongs to the TPP enzyme family.</text>
</comment>
<sequence>MDGSVAKGTSCIQDSQSSSVIANTDATLGRHLARRLVEIGIQDVFSVPGDFNLTLLDHLIAEPRLKNIGCCNELNAGYAADGYARARGVGACVVTFTVGGLSVLNAIAGAYSENLPVICIVGGPNTNDYGTNRILHHTIGLPDFSQELRCFQTVTCYQAVVNNLDDAHEQIDRAISTALKESKPVYISISCNLPAIPHPTFSRDPIPFSLSPRLSNKRGLEAAVDAAVTFLSKAVKPVMIGGPKLRVAKACDAFVELADSSGYAMAVMLQPKGLVAEQHPHFIGTYWGAVGTSYCAEIVESADAYLFAGPIFNDYSSVGYSLLIKKEKSIIVQPDRVVIGNGPAFGCVLMKDFLSELAKKIKKNETAYENYRRIFVPEGTPLKSEPNEPLRVNVLFQHIQKMLSDETAVIAETGDSWFNCQKLKLPEGCGYVTNNSLSAWYPFYLQTLEEKSSCCRYEFQMQYGSIGWSVGATLGYAQSVPKKRVISCIGDGSFQVTAQDVSTMIRCEQKNIIFLINNGGYTIEVEIHDGPYNVIKNWNYTGLVDAIHNGEGNCWTMKVRTEEELTEAIATATGEKKDCLCFIEVIVHKDDTSKELLEWGSRVCSANGRPPNPQ</sequence>
<keyword id="KW-0210">Decarboxylase</keyword>
<keyword id="KW-0456">Lyase</keyword>
<keyword id="KW-0460">Magnesium</keyword>
<keyword id="KW-0479">Metal-binding</keyword>
<keyword id="KW-1185">Reference proteome</keyword>
<keyword id="KW-0786">Thiamine pyrophosphate</keyword>
<evidence type="ECO:0000250" key="1"/>
<evidence type="ECO:0000305" key="2"/>
<accession>P51846</accession>
<gene>
    <name type="primary">PDC2</name>
</gene>
<dbReference type="EC" id="4.1.1.1"/>
<dbReference type="EMBL" id="X81855">
    <property type="protein sequence ID" value="CAA57448.1"/>
    <property type="molecule type" value="mRNA"/>
</dbReference>
<dbReference type="PIR" id="S57821">
    <property type="entry name" value="S57821"/>
</dbReference>
<dbReference type="RefSeq" id="NP_001312861.1">
    <property type="nucleotide sequence ID" value="NM_001325932.1"/>
</dbReference>
<dbReference type="SMR" id="P51846"/>
<dbReference type="STRING" id="4097.P51846"/>
<dbReference type="PaxDb" id="4097-P51846"/>
<dbReference type="ProMEX" id="P51846"/>
<dbReference type="GeneID" id="107814772"/>
<dbReference type="KEGG" id="nta:107814772"/>
<dbReference type="OrthoDB" id="3970464at2759"/>
<dbReference type="Proteomes" id="UP000084051">
    <property type="component" value="Unplaced"/>
</dbReference>
<dbReference type="GO" id="GO:0005829">
    <property type="term" value="C:cytosol"/>
    <property type="evidence" value="ECO:0000318"/>
    <property type="project" value="GO_Central"/>
</dbReference>
<dbReference type="GO" id="GO:0000287">
    <property type="term" value="F:magnesium ion binding"/>
    <property type="evidence" value="ECO:0007669"/>
    <property type="project" value="InterPro"/>
</dbReference>
<dbReference type="GO" id="GO:0004737">
    <property type="term" value="F:pyruvate decarboxylase activity"/>
    <property type="evidence" value="ECO:0000318"/>
    <property type="project" value="GO_Central"/>
</dbReference>
<dbReference type="GO" id="GO:0030976">
    <property type="term" value="F:thiamine pyrophosphate binding"/>
    <property type="evidence" value="ECO:0007669"/>
    <property type="project" value="InterPro"/>
</dbReference>
<dbReference type="GO" id="GO:0000949">
    <property type="term" value="P:aromatic amino acid family catabolic process to alcohol via Ehrlich pathway"/>
    <property type="evidence" value="ECO:0000318"/>
    <property type="project" value="GO_Central"/>
</dbReference>
<dbReference type="CDD" id="cd02005">
    <property type="entry name" value="TPP_PDC_IPDC"/>
    <property type="match status" value="1"/>
</dbReference>
<dbReference type="CDD" id="cd07038">
    <property type="entry name" value="TPP_PYR_PDC_IPDC_like"/>
    <property type="match status" value="1"/>
</dbReference>
<dbReference type="FunFam" id="3.40.50.1220:FF:000009">
    <property type="entry name" value="Pyruvate decarboxylase 1"/>
    <property type="match status" value="1"/>
</dbReference>
<dbReference type="FunFam" id="3.40.50.970:FF:000021">
    <property type="entry name" value="Pyruvate decarboxylase 1"/>
    <property type="match status" value="1"/>
</dbReference>
<dbReference type="FunFam" id="3.40.50.970:FF:000017">
    <property type="entry name" value="pyruvate decarboxylase 1"/>
    <property type="match status" value="1"/>
</dbReference>
<dbReference type="Gene3D" id="3.40.50.970">
    <property type="match status" value="2"/>
</dbReference>
<dbReference type="Gene3D" id="3.40.50.1220">
    <property type="entry name" value="TPP-binding domain"/>
    <property type="match status" value="1"/>
</dbReference>
<dbReference type="InterPro" id="IPR029035">
    <property type="entry name" value="DHS-like_NAD/FAD-binding_dom"/>
</dbReference>
<dbReference type="InterPro" id="IPR012110">
    <property type="entry name" value="PDC/IPDC-like"/>
</dbReference>
<dbReference type="InterPro" id="IPR029061">
    <property type="entry name" value="THDP-binding"/>
</dbReference>
<dbReference type="InterPro" id="IPR012000">
    <property type="entry name" value="Thiamin_PyroP_enz_cen_dom"/>
</dbReference>
<dbReference type="InterPro" id="IPR012001">
    <property type="entry name" value="Thiamin_PyroP_enz_TPP-bd_dom"/>
</dbReference>
<dbReference type="InterPro" id="IPR011766">
    <property type="entry name" value="TPP_enzyme_TPP-bd"/>
</dbReference>
<dbReference type="InterPro" id="IPR047214">
    <property type="entry name" value="TPP_PDC_IPDC"/>
</dbReference>
<dbReference type="InterPro" id="IPR047213">
    <property type="entry name" value="TPP_PYR_PDC_IPDC-like"/>
</dbReference>
<dbReference type="PANTHER" id="PTHR43452">
    <property type="entry name" value="PYRUVATE DECARBOXYLASE"/>
    <property type="match status" value="1"/>
</dbReference>
<dbReference type="PANTHER" id="PTHR43452:SF20">
    <property type="entry name" value="PYRUVATE DECARBOXYLASE 2"/>
    <property type="match status" value="1"/>
</dbReference>
<dbReference type="Pfam" id="PF02775">
    <property type="entry name" value="TPP_enzyme_C"/>
    <property type="match status" value="1"/>
</dbReference>
<dbReference type="Pfam" id="PF00205">
    <property type="entry name" value="TPP_enzyme_M"/>
    <property type="match status" value="1"/>
</dbReference>
<dbReference type="Pfam" id="PF02776">
    <property type="entry name" value="TPP_enzyme_N"/>
    <property type="match status" value="1"/>
</dbReference>
<dbReference type="PIRSF" id="PIRSF036565">
    <property type="entry name" value="Pyruvt_ip_decrb"/>
    <property type="match status" value="1"/>
</dbReference>
<dbReference type="SUPFAM" id="SSF52467">
    <property type="entry name" value="DHS-like NAD/FAD-binding domain"/>
    <property type="match status" value="1"/>
</dbReference>
<dbReference type="SUPFAM" id="SSF52518">
    <property type="entry name" value="Thiamin diphosphate-binding fold (THDP-binding)"/>
    <property type="match status" value="2"/>
</dbReference>
<reference key="1">
    <citation type="journal article" date="1995" name="Plant Mol. Biol.">
        <title>Aerobic fermentation in tobacco pollen.</title>
        <authorList>
            <person name="Bucher M."/>
            <person name="Brander K."/>
            <person name="Sbicego S."/>
            <person name="Mandel T."/>
            <person name="Kuhlemeier C."/>
        </authorList>
    </citation>
    <scope>NUCLEOTIDE SEQUENCE [MRNA]</scope>
    <source>
        <strain>cv. Samsun</strain>
        <tissue>Pollen</tissue>
    </source>
</reference>
<proteinExistence type="evidence at transcript level"/>
<name>PDC2_TOBAC</name>
<protein>
    <recommendedName>
        <fullName>Pyruvate decarboxylase 2</fullName>
        <shortName>NtPDC2</shortName>
        <ecNumber>4.1.1.1</ecNumber>
    </recommendedName>
</protein>
<organism>
    <name type="scientific">Nicotiana tabacum</name>
    <name type="common">Common tobacco</name>
    <dbReference type="NCBI Taxonomy" id="4097"/>
    <lineage>
        <taxon>Eukaryota</taxon>
        <taxon>Viridiplantae</taxon>
        <taxon>Streptophyta</taxon>
        <taxon>Embryophyta</taxon>
        <taxon>Tracheophyta</taxon>
        <taxon>Spermatophyta</taxon>
        <taxon>Magnoliopsida</taxon>
        <taxon>eudicotyledons</taxon>
        <taxon>Gunneridae</taxon>
        <taxon>Pentapetalae</taxon>
        <taxon>asterids</taxon>
        <taxon>lamiids</taxon>
        <taxon>Solanales</taxon>
        <taxon>Solanaceae</taxon>
        <taxon>Nicotianoideae</taxon>
        <taxon>Nicotianeae</taxon>
        <taxon>Nicotiana</taxon>
    </lineage>
</organism>
<feature type="chain" id="PRO_0000090778" description="Pyruvate decarboxylase 2">
    <location>
        <begin position="1"/>
        <end position="614"/>
    </location>
</feature>
<feature type="region of interest" description="Thiamine pyrophosphate binding">
    <location>
        <begin position="415"/>
        <end position="523"/>
    </location>
</feature>
<feature type="binding site" evidence="1">
    <location>
        <position position="50"/>
    </location>
    <ligand>
        <name>substrate</name>
    </ligand>
</feature>
<feature type="binding site" evidence="1">
    <location>
        <position position="137"/>
    </location>
    <ligand>
        <name>substrate</name>
    </ligand>
</feature>
<feature type="binding site" evidence="1">
    <location>
        <position position="491"/>
    </location>
    <ligand>
        <name>Mg(2+)</name>
        <dbReference type="ChEBI" id="CHEBI:18420"/>
    </ligand>
</feature>
<feature type="binding site" evidence="1">
    <location>
        <position position="518"/>
    </location>
    <ligand>
        <name>Mg(2+)</name>
        <dbReference type="ChEBI" id="CHEBI:18420"/>
    </ligand>
</feature>
<feature type="binding site" evidence="1">
    <location>
        <position position="520"/>
    </location>
    <ligand>
        <name>Mg(2+)</name>
        <dbReference type="ChEBI" id="CHEBI:18420"/>
    </ligand>
</feature>
<feature type="binding site" evidence="1">
    <location>
        <position position="524"/>
    </location>
    <ligand>
        <name>substrate</name>
    </ligand>
</feature>